<sequence>MVKIRLRRAGRKKLPVYQIVAADARAPRDGKFLEVIGHYQPTAKPHAITLDKERVAYWLGVGAQPTTTAHSLIRATGLLHEMNMKRKGRSEEEIAAEMEQWQARQNERREKRLAIKTRRRQAKKAAEAEGQESA</sequence>
<keyword id="KW-0687">Ribonucleoprotein</keyword>
<keyword id="KW-0689">Ribosomal protein</keyword>
<proteinExistence type="inferred from homology"/>
<reference key="1">
    <citation type="submission" date="2008-06" db="EMBL/GenBank/DDBJ databases">
        <title>Complete sequence of Chlorobium phaeobacteroides BS1.</title>
        <authorList>
            <consortium name="US DOE Joint Genome Institute"/>
            <person name="Lucas S."/>
            <person name="Copeland A."/>
            <person name="Lapidus A."/>
            <person name="Glavina del Rio T."/>
            <person name="Dalin E."/>
            <person name="Tice H."/>
            <person name="Bruce D."/>
            <person name="Goodwin L."/>
            <person name="Pitluck S."/>
            <person name="Schmutz J."/>
            <person name="Larimer F."/>
            <person name="Land M."/>
            <person name="Hauser L."/>
            <person name="Kyrpides N."/>
            <person name="Ovchinnikova G."/>
            <person name="Li T."/>
            <person name="Liu Z."/>
            <person name="Zhao F."/>
            <person name="Overmann J."/>
            <person name="Bryant D.A."/>
            <person name="Richardson P."/>
        </authorList>
    </citation>
    <scope>NUCLEOTIDE SEQUENCE [LARGE SCALE GENOMIC DNA]</scope>
    <source>
        <strain>BS1</strain>
    </source>
</reference>
<name>RS16_CHLPB</name>
<feature type="chain" id="PRO_1000196364" description="Small ribosomal subunit protein bS16">
    <location>
        <begin position="1"/>
        <end position="134"/>
    </location>
</feature>
<feature type="region of interest" description="Disordered" evidence="2">
    <location>
        <begin position="105"/>
        <end position="134"/>
    </location>
</feature>
<feature type="compositionally biased region" description="Basic residues" evidence="2">
    <location>
        <begin position="114"/>
        <end position="123"/>
    </location>
</feature>
<protein>
    <recommendedName>
        <fullName evidence="1">Small ribosomal subunit protein bS16</fullName>
    </recommendedName>
    <alternativeName>
        <fullName evidence="3">30S ribosomal protein S16</fullName>
    </alternativeName>
</protein>
<organism>
    <name type="scientific">Chlorobium phaeobacteroides (strain BS1)</name>
    <dbReference type="NCBI Taxonomy" id="331678"/>
    <lineage>
        <taxon>Bacteria</taxon>
        <taxon>Pseudomonadati</taxon>
        <taxon>Chlorobiota</taxon>
        <taxon>Chlorobiia</taxon>
        <taxon>Chlorobiales</taxon>
        <taxon>Chlorobiaceae</taxon>
        <taxon>Chlorobium/Pelodictyon group</taxon>
        <taxon>Chlorobium</taxon>
    </lineage>
</organism>
<comment type="similarity">
    <text evidence="1">Belongs to the bacterial ribosomal protein bS16 family.</text>
</comment>
<gene>
    <name evidence="1" type="primary">rpsP</name>
    <name type="ordered locus">Cphamn1_1292</name>
</gene>
<evidence type="ECO:0000255" key="1">
    <source>
        <dbReference type="HAMAP-Rule" id="MF_00385"/>
    </source>
</evidence>
<evidence type="ECO:0000256" key="2">
    <source>
        <dbReference type="SAM" id="MobiDB-lite"/>
    </source>
</evidence>
<evidence type="ECO:0000305" key="3"/>
<dbReference type="EMBL" id="CP001101">
    <property type="protein sequence ID" value="ACE04223.1"/>
    <property type="molecule type" value="Genomic_DNA"/>
</dbReference>
<dbReference type="SMR" id="B3EJ23"/>
<dbReference type="STRING" id="331678.Cphamn1_1292"/>
<dbReference type="KEGG" id="cpb:Cphamn1_1292"/>
<dbReference type="eggNOG" id="COG0228">
    <property type="taxonomic scope" value="Bacteria"/>
</dbReference>
<dbReference type="HOGENOM" id="CLU_100590_3_2_10"/>
<dbReference type="OrthoDB" id="9807878at2"/>
<dbReference type="GO" id="GO:0005737">
    <property type="term" value="C:cytoplasm"/>
    <property type="evidence" value="ECO:0007669"/>
    <property type="project" value="UniProtKB-ARBA"/>
</dbReference>
<dbReference type="GO" id="GO:0015935">
    <property type="term" value="C:small ribosomal subunit"/>
    <property type="evidence" value="ECO:0007669"/>
    <property type="project" value="TreeGrafter"/>
</dbReference>
<dbReference type="GO" id="GO:0003735">
    <property type="term" value="F:structural constituent of ribosome"/>
    <property type="evidence" value="ECO:0007669"/>
    <property type="project" value="InterPro"/>
</dbReference>
<dbReference type="GO" id="GO:0006412">
    <property type="term" value="P:translation"/>
    <property type="evidence" value="ECO:0007669"/>
    <property type="project" value="UniProtKB-UniRule"/>
</dbReference>
<dbReference type="Gene3D" id="3.30.1320.10">
    <property type="match status" value="1"/>
</dbReference>
<dbReference type="HAMAP" id="MF_00385">
    <property type="entry name" value="Ribosomal_bS16"/>
    <property type="match status" value="1"/>
</dbReference>
<dbReference type="InterPro" id="IPR000307">
    <property type="entry name" value="Ribosomal_bS16"/>
</dbReference>
<dbReference type="InterPro" id="IPR023803">
    <property type="entry name" value="Ribosomal_bS16_dom_sf"/>
</dbReference>
<dbReference type="NCBIfam" id="TIGR00002">
    <property type="entry name" value="S16"/>
    <property type="match status" value="1"/>
</dbReference>
<dbReference type="PANTHER" id="PTHR12919">
    <property type="entry name" value="30S RIBOSOMAL PROTEIN S16"/>
    <property type="match status" value="1"/>
</dbReference>
<dbReference type="PANTHER" id="PTHR12919:SF20">
    <property type="entry name" value="SMALL RIBOSOMAL SUBUNIT PROTEIN BS16M"/>
    <property type="match status" value="1"/>
</dbReference>
<dbReference type="Pfam" id="PF00886">
    <property type="entry name" value="Ribosomal_S16"/>
    <property type="match status" value="1"/>
</dbReference>
<dbReference type="SUPFAM" id="SSF54565">
    <property type="entry name" value="Ribosomal protein S16"/>
    <property type="match status" value="1"/>
</dbReference>
<accession>B3EJ23</accession>